<comment type="catalytic activity">
    <reaction evidence="1">
        <text>urea + 2 H2O + H(+) = hydrogencarbonate + 2 NH4(+)</text>
        <dbReference type="Rhea" id="RHEA:20557"/>
        <dbReference type="ChEBI" id="CHEBI:15377"/>
        <dbReference type="ChEBI" id="CHEBI:15378"/>
        <dbReference type="ChEBI" id="CHEBI:16199"/>
        <dbReference type="ChEBI" id="CHEBI:17544"/>
        <dbReference type="ChEBI" id="CHEBI:28938"/>
        <dbReference type="EC" id="3.5.1.5"/>
    </reaction>
</comment>
<comment type="cofactor">
    <cofactor evidence="1">
        <name>Ni cation</name>
        <dbReference type="ChEBI" id="CHEBI:25516"/>
    </cofactor>
    <text evidence="1">Binds 2 nickel ions per subunit.</text>
</comment>
<comment type="pathway">
    <text evidence="1">Nitrogen metabolism; urea degradation; CO(2) and NH(3) from urea (urease route): step 1/1.</text>
</comment>
<comment type="subunit">
    <text evidence="1">Heterotrimer of UreA (gamma), UreB (beta) and UreC (alpha) subunits. Three heterotrimers associate to form the active enzyme.</text>
</comment>
<comment type="subcellular location">
    <subcellularLocation>
        <location evidence="1">Cytoplasm</location>
    </subcellularLocation>
</comment>
<comment type="PTM">
    <text evidence="1">Carboxylation allows a single lysine to coordinate two nickel ions.</text>
</comment>
<comment type="similarity">
    <text evidence="1">Belongs to the metallo-dependent hydrolases superfamily. Urease alpha subunit family.</text>
</comment>
<protein>
    <recommendedName>
        <fullName evidence="1">Urease subunit alpha</fullName>
        <ecNumber evidence="1">3.5.1.5</ecNumber>
    </recommendedName>
    <alternativeName>
        <fullName evidence="1">Urea amidohydrolase subunit alpha</fullName>
    </alternativeName>
</protein>
<dbReference type="EC" id="3.5.1.5" evidence="1"/>
<dbReference type="EMBL" id="CP000580">
    <property type="protein sequence ID" value="ABN98612.1"/>
    <property type="molecule type" value="Genomic_DNA"/>
</dbReference>
<dbReference type="SMR" id="A3Q0D5"/>
<dbReference type="MEROPS" id="M38.982"/>
<dbReference type="KEGG" id="mjl:Mjls_2832"/>
<dbReference type="HOGENOM" id="CLU_000980_0_0_11"/>
<dbReference type="BioCyc" id="MSP164757:G1G8C-2851-MONOMER"/>
<dbReference type="UniPathway" id="UPA00258">
    <property type="reaction ID" value="UER00370"/>
</dbReference>
<dbReference type="GO" id="GO:0005737">
    <property type="term" value="C:cytoplasm"/>
    <property type="evidence" value="ECO:0007669"/>
    <property type="project" value="UniProtKB-SubCell"/>
</dbReference>
<dbReference type="GO" id="GO:0016151">
    <property type="term" value="F:nickel cation binding"/>
    <property type="evidence" value="ECO:0007669"/>
    <property type="project" value="UniProtKB-UniRule"/>
</dbReference>
<dbReference type="GO" id="GO:0009039">
    <property type="term" value="F:urease activity"/>
    <property type="evidence" value="ECO:0007669"/>
    <property type="project" value="UniProtKB-UniRule"/>
</dbReference>
<dbReference type="GO" id="GO:0043419">
    <property type="term" value="P:urea catabolic process"/>
    <property type="evidence" value="ECO:0007669"/>
    <property type="project" value="UniProtKB-UniRule"/>
</dbReference>
<dbReference type="CDD" id="cd00375">
    <property type="entry name" value="Urease_alpha"/>
    <property type="match status" value="1"/>
</dbReference>
<dbReference type="Gene3D" id="3.20.20.140">
    <property type="entry name" value="Metal-dependent hydrolases"/>
    <property type="match status" value="1"/>
</dbReference>
<dbReference type="Gene3D" id="2.30.40.10">
    <property type="entry name" value="Urease, subunit C, domain 1"/>
    <property type="match status" value="1"/>
</dbReference>
<dbReference type="HAMAP" id="MF_01953">
    <property type="entry name" value="Urease_alpha"/>
    <property type="match status" value="1"/>
</dbReference>
<dbReference type="InterPro" id="IPR006680">
    <property type="entry name" value="Amidohydro-rel"/>
</dbReference>
<dbReference type="InterPro" id="IPR011059">
    <property type="entry name" value="Metal-dep_hydrolase_composite"/>
</dbReference>
<dbReference type="InterPro" id="IPR032466">
    <property type="entry name" value="Metal_Hydrolase"/>
</dbReference>
<dbReference type="InterPro" id="IPR011612">
    <property type="entry name" value="Urease_alpha_N_dom"/>
</dbReference>
<dbReference type="InterPro" id="IPR050112">
    <property type="entry name" value="Urease_alpha_subunit"/>
</dbReference>
<dbReference type="InterPro" id="IPR017950">
    <property type="entry name" value="Urease_AS"/>
</dbReference>
<dbReference type="InterPro" id="IPR005848">
    <property type="entry name" value="Urease_asu"/>
</dbReference>
<dbReference type="InterPro" id="IPR017951">
    <property type="entry name" value="Urease_asu_c"/>
</dbReference>
<dbReference type="InterPro" id="IPR029754">
    <property type="entry name" value="Urease_Ni-bd"/>
</dbReference>
<dbReference type="NCBIfam" id="NF009685">
    <property type="entry name" value="PRK13206.1"/>
    <property type="match status" value="1"/>
</dbReference>
<dbReference type="NCBIfam" id="NF009686">
    <property type="entry name" value="PRK13207.1"/>
    <property type="match status" value="1"/>
</dbReference>
<dbReference type="NCBIfam" id="TIGR01792">
    <property type="entry name" value="urease_alph"/>
    <property type="match status" value="1"/>
</dbReference>
<dbReference type="PANTHER" id="PTHR43440">
    <property type="entry name" value="UREASE"/>
    <property type="match status" value="1"/>
</dbReference>
<dbReference type="PANTHER" id="PTHR43440:SF1">
    <property type="entry name" value="UREASE"/>
    <property type="match status" value="1"/>
</dbReference>
<dbReference type="Pfam" id="PF01979">
    <property type="entry name" value="Amidohydro_1"/>
    <property type="match status" value="1"/>
</dbReference>
<dbReference type="Pfam" id="PF00449">
    <property type="entry name" value="Urease_alpha"/>
    <property type="match status" value="1"/>
</dbReference>
<dbReference type="PRINTS" id="PR01752">
    <property type="entry name" value="UREASE"/>
</dbReference>
<dbReference type="SUPFAM" id="SSF51338">
    <property type="entry name" value="Composite domain of metallo-dependent hydrolases"/>
    <property type="match status" value="2"/>
</dbReference>
<dbReference type="SUPFAM" id="SSF51556">
    <property type="entry name" value="Metallo-dependent hydrolases"/>
    <property type="match status" value="1"/>
</dbReference>
<dbReference type="PROSITE" id="PS01120">
    <property type="entry name" value="UREASE_1"/>
    <property type="match status" value="1"/>
</dbReference>
<dbReference type="PROSITE" id="PS00145">
    <property type="entry name" value="UREASE_2"/>
    <property type="match status" value="1"/>
</dbReference>
<dbReference type="PROSITE" id="PS51368">
    <property type="entry name" value="UREASE_3"/>
    <property type="match status" value="1"/>
</dbReference>
<evidence type="ECO:0000255" key="1">
    <source>
        <dbReference type="HAMAP-Rule" id="MF_01953"/>
    </source>
</evidence>
<organism>
    <name type="scientific">Mycobacterium sp. (strain JLS)</name>
    <dbReference type="NCBI Taxonomy" id="164757"/>
    <lineage>
        <taxon>Bacteria</taxon>
        <taxon>Bacillati</taxon>
        <taxon>Actinomycetota</taxon>
        <taxon>Actinomycetes</taxon>
        <taxon>Mycobacteriales</taxon>
        <taxon>Mycobacteriaceae</taxon>
        <taxon>Mycobacterium</taxon>
    </lineage>
</organism>
<reference key="1">
    <citation type="submission" date="2007-02" db="EMBL/GenBank/DDBJ databases">
        <title>Complete sequence of Mycobacterium sp. JLS.</title>
        <authorList>
            <consortium name="US DOE Joint Genome Institute"/>
            <person name="Copeland A."/>
            <person name="Lucas S."/>
            <person name="Lapidus A."/>
            <person name="Barry K."/>
            <person name="Detter J.C."/>
            <person name="Glavina del Rio T."/>
            <person name="Hammon N."/>
            <person name="Israni S."/>
            <person name="Dalin E."/>
            <person name="Tice H."/>
            <person name="Pitluck S."/>
            <person name="Chain P."/>
            <person name="Malfatti S."/>
            <person name="Shin M."/>
            <person name="Vergez L."/>
            <person name="Schmutz J."/>
            <person name="Larimer F."/>
            <person name="Land M."/>
            <person name="Hauser L."/>
            <person name="Kyrpides N."/>
            <person name="Mikhailova N."/>
            <person name="Miller C.D."/>
            <person name="Anderson A.J."/>
            <person name="Sims R.C."/>
            <person name="Richardson P."/>
        </authorList>
    </citation>
    <scope>NUCLEOTIDE SEQUENCE [LARGE SCALE GENOMIC DNA]</scope>
    <source>
        <strain>JLS</strain>
    </source>
</reference>
<sequence>MTGLSRERYAALYGPTTGDRIRLADTDLVIEITEDRSGGTGLAGDEAVFGGGKVLRESMGQSRATRADGAPDTVITGAVILDHWGIIKADIGIRDGRIVAIGKAGNPDIMDGVHPDLVVGPSTEIIAGNGRILTAGAIDCHVHLICPQIMEEALGGGITTIVAGGTGPAEGSKATTVTPGAWHLARMLEALDTWPLNVVLLGKGNTVSAEAMWEQLRGGAAGFKLHEDWGTTPAAIDACLTVADAAGVQVNIHTDTLNEMAFVEDTLAAIKGRSIHAYHTEGAGGGHAPDIITVASHPNVLPSSTNPTRPHTVNTLDEHLDMLMVCHHLNPSVPEDLAFAESRIRPSTIAAEDLLHDIGAISMIGSDAQAMGRIGEVVLRTWQTAHVMKRRRGALEGDGRADNNRARRYVAKYTICPAVAHGLDGEIGSVEVGKLADLVLWEPAFFGVRPHAVIKGGMIAWAAMGDANASIPTPQPVLPRPMFGAAPAAAAATSVHFVSPQAIEDGLADRIDVRRSLIAVADCRHVGKAQMPLNDAMPRIEVDPDTFTVRIDGDVWQEQPAAELPMAQRYFLF</sequence>
<feature type="chain" id="PRO_1000070670" description="Urease subunit alpha">
    <location>
        <begin position="1"/>
        <end position="573"/>
    </location>
</feature>
<feature type="domain" description="Urease" evidence="1">
    <location>
        <begin position="136"/>
        <end position="573"/>
    </location>
</feature>
<feature type="active site" description="Proton donor" evidence="1">
    <location>
        <position position="327"/>
    </location>
</feature>
<feature type="binding site" evidence="1">
    <location>
        <position position="141"/>
    </location>
    <ligand>
        <name>Ni(2+)</name>
        <dbReference type="ChEBI" id="CHEBI:49786"/>
        <label>1</label>
    </ligand>
</feature>
<feature type="binding site" evidence="1">
    <location>
        <position position="143"/>
    </location>
    <ligand>
        <name>Ni(2+)</name>
        <dbReference type="ChEBI" id="CHEBI:49786"/>
        <label>1</label>
    </ligand>
</feature>
<feature type="binding site" description="via carbamate group" evidence="1">
    <location>
        <position position="224"/>
    </location>
    <ligand>
        <name>Ni(2+)</name>
        <dbReference type="ChEBI" id="CHEBI:49786"/>
        <label>1</label>
    </ligand>
</feature>
<feature type="binding site" description="via carbamate group" evidence="1">
    <location>
        <position position="224"/>
    </location>
    <ligand>
        <name>Ni(2+)</name>
        <dbReference type="ChEBI" id="CHEBI:49786"/>
        <label>2</label>
    </ligand>
</feature>
<feature type="binding site" evidence="1">
    <location>
        <position position="226"/>
    </location>
    <ligand>
        <name>substrate</name>
    </ligand>
</feature>
<feature type="binding site" evidence="1">
    <location>
        <position position="253"/>
    </location>
    <ligand>
        <name>Ni(2+)</name>
        <dbReference type="ChEBI" id="CHEBI:49786"/>
        <label>2</label>
    </ligand>
</feature>
<feature type="binding site" evidence="1">
    <location>
        <position position="279"/>
    </location>
    <ligand>
        <name>Ni(2+)</name>
        <dbReference type="ChEBI" id="CHEBI:49786"/>
        <label>2</label>
    </ligand>
</feature>
<feature type="binding site" evidence="1">
    <location>
        <position position="367"/>
    </location>
    <ligand>
        <name>Ni(2+)</name>
        <dbReference type="ChEBI" id="CHEBI:49786"/>
        <label>1</label>
    </ligand>
</feature>
<feature type="modified residue" description="N6-carboxylysine" evidence="1">
    <location>
        <position position="224"/>
    </location>
</feature>
<keyword id="KW-0963">Cytoplasm</keyword>
<keyword id="KW-0378">Hydrolase</keyword>
<keyword id="KW-0479">Metal-binding</keyword>
<keyword id="KW-0533">Nickel</keyword>
<gene>
    <name evidence="1" type="primary">ureC</name>
    <name type="ordered locus">Mjls_2832</name>
</gene>
<name>URE1_MYCSJ</name>
<proteinExistence type="inferred from homology"/>
<accession>A3Q0D5</accession>